<comment type="function">
    <text evidence="1">Binds directly to 23S rRNA. Probably involved in E site tRNA release.</text>
</comment>
<comment type="function">
    <text evidence="1">Protein L1 is also a translational repressor protein, it controls the translation of its operon by binding to its mRNA.</text>
</comment>
<comment type="subunit">
    <text evidence="1">Part of the 50S ribosomal subunit.</text>
</comment>
<comment type="similarity">
    <text evidence="1">Belongs to the universal ribosomal protein uL1 family.</text>
</comment>
<organism>
    <name type="scientific">Haloquadratum walsbyi (strain DSM 16790 / HBSQ001)</name>
    <dbReference type="NCBI Taxonomy" id="362976"/>
    <lineage>
        <taxon>Archaea</taxon>
        <taxon>Methanobacteriati</taxon>
        <taxon>Methanobacteriota</taxon>
        <taxon>Stenosarchaea group</taxon>
        <taxon>Halobacteria</taxon>
        <taxon>Halobacteriales</taxon>
        <taxon>Haloferacaceae</taxon>
        <taxon>Haloquadratum</taxon>
    </lineage>
</organism>
<evidence type="ECO:0000255" key="1">
    <source>
        <dbReference type="HAMAP-Rule" id="MF_01318"/>
    </source>
</evidence>
<evidence type="ECO:0000305" key="2"/>
<dbReference type="EMBL" id="AM180088">
    <property type="protein sequence ID" value="CAJ53010.1"/>
    <property type="molecule type" value="Genomic_DNA"/>
</dbReference>
<dbReference type="RefSeq" id="WP_011572121.1">
    <property type="nucleotide sequence ID" value="NC_008212.1"/>
</dbReference>
<dbReference type="SMR" id="Q18G90"/>
<dbReference type="STRING" id="362976.HQ_2903A"/>
<dbReference type="GeneID" id="4194598"/>
<dbReference type="KEGG" id="hwa:HQ_2903A"/>
<dbReference type="eggNOG" id="arCOG04289">
    <property type="taxonomic scope" value="Archaea"/>
</dbReference>
<dbReference type="HOGENOM" id="CLU_062853_4_0_2"/>
<dbReference type="Proteomes" id="UP000001975">
    <property type="component" value="Chromosome"/>
</dbReference>
<dbReference type="GO" id="GO:0015934">
    <property type="term" value="C:large ribosomal subunit"/>
    <property type="evidence" value="ECO:0007669"/>
    <property type="project" value="InterPro"/>
</dbReference>
<dbReference type="GO" id="GO:0019843">
    <property type="term" value="F:rRNA binding"/>
    <property type="evidence" value="ECO:0007669"/>
    <property type="project" value="UniProtKB-UniRule"/>
</dbReference>
<dbReference type="GO" id="GO:0003735">
    <property type="term" value="F:structural constituent of ribosome"/>
    <property type="evidence" value="ECO:0007669"/>
    <property type="project" value="InterPro"/>
</dbReference>
<dbReference type="GO" id="GO:0000049">
    <property type="term" value="F:tRNA binding"/>
    <property type="evidence" value="ECO:0007669"/>
    <property type="project" value="UniProtKB-KW"/>
</dbReference>
<dbReference type="GO" id="GO:0006417">
    <property type="term" value="P:regulation of translation"/>
    <property type="evidence" value="ECO:0007669"/>
    <property type="project" value="UniProtKB-KW"/>
</dbReference>
<dbReference type="GO" id="GO:0006412">
    <property type="term" value="P:translation"/>
    <property type="evidence" value="ECO:0007669"/>
    <property type="project" value="UniProtKB-UniRule"/>
</dbReference>
<dbReference type="CDD" id="cd00403">
    <property type="entry name" value="Ribosomal_L1"/>
    <property type="match status" value="1"/>
</dbReference>
<dbReference type="FunFam" id="3.40.50.790:FF:000005">
    <property type="entry name" value="50S ribosomal protein L1"/>
    <property type="match status" value="1"/>
</dbReference>
<dbReference type="Gene3D" id="3.30.190.20">
    <property type="match status" value="1"/>
</dbReference>
<dbReference type="Gene3D" id="3.40.50.790">
    <property type="match status" value="1"/>
</dbReference>
<dbReference type="HAMAP" id="MF_01318_A">
    <property type="entry name" value="Ribosomal_uL1_A"/>
    <property type="match status" value="1"/>
</dbReference>
<dbReference type="InterPro" id="IPR002143">
    <property type="entry name" value="Ribosomal_uL1"/>
</dbReference>
<dbReference type="InterPro" id="IPR023674">
    <property type="entry name" value="Ribosomal_uL1-like"/>
</dbReference>
<dbReference type="InterPro" id="IPR028364">
    <property type="entry name" value="Ribosomal_uL1/biogenesis"/>
</dbReference>
<dbReference type="InterPro" id="IPR016095">
    <property type="entry name" value="Ribosomal_uL1_3-a/b-sand"/>
</dbReference>
<dbReference type="InterPro" id="IPR023669">
    <property type="entry name" value="Ribosomal_uL1_arc"/>
</dbReference>
<dbReference type="InterPro" id="IPR023673">
    <property type="entry name" value="Ribosomal_uL1_CS"/>
</dbReference>
<dbReference type="NCBIfam" id="NF003244">
    <property type="entry name" value="PRK04203.1"/>
    <property type="match status" value="1"/>
</dbReference>
<dbReference type="PANTHER" id="PTHR36427">
    <property type="entry name" value="54S RIBOSOMAL PROTEIN L1, MITOCHONDRIAL"/>
    <property type="match status" value="1"/>
</dbReference>
<dbReference type="PANTHER" id="PTHR36427:SF3">
    <property type="entry name" value="LARGE RIBOSOMAL SUBUNIT PROTEIN UL1M"/>
    <property type="match status" value="1"/>
</dbReference>
<dbReference type="Pfam" id="PF00687">
    <property type="entry name" value="Ribosomal_L1"/>
    <property type="match status" value="1"/>
</dbReference>
<dbReference type="PIRSF" id="PIRSF002155">
    <property type="entry name" value="Ribosomal_L1"/>
    <property type="match status" value="1"/>
</dbReference>
<dbReference type="SUPFAM" id="SSF56808">
    <property type="entry name" value="Ribosomal protein L1"/>
    <property type="match status" value="1"/>
</dbReference>
<dbReference type="PROSITE" id="PS01199">
    <property type="entry name" value="RIBOSOMAL_L1"/>
    <property type="match status" value="1"/>
</dbReference>
<accession>Q18G90</accession>
<feature type="chain" id="PRO_0000308143" description="Large ribosomal subunit protein uL1">
    <location>
        <begin position="1"/>
        <end position="212"/>
    </location>
</feature>
<reference key="1">
    <citation type="journal article" date="2006" name="BMC Genomics">
        <title>The genome of the square archaeon Haloquadratum walsbyi: life at the limits of water activity.</title>
        <authorList>
            <person name="Bolhuis H."/>
            <person name="Palm P."/>
            <person name="Wende A."/>
            <person name="Falb M."/>
            <person name="Rampp M."/>
            <person name="Rodriguez-Valera F."/>
            <person name="Pfeiffer F."/>
            <person name="Oesterhelt D."/>
        </authorList>
    </citation>
    <scope>NUCLEOTIDE SEQUENCE [LARGE SCALE GENOMIC DNA]</scope>
    <source>
        <strain>DSM 16790 / HBSQ001</strain>
    </source>
</reference>
<protein>
    <recommendedName>
        <fullName evidence="1">Large ribosomal subunit protein uL1</fullName>
    </recommendedName>
    <alternativeName>
        <fullName evidence="2">50S ribosomal protein L1</fullName>
    </alternativeName>
</protein>
<keyword id="KW-1185">Reference proteome</keyword>
<keyword id="KW-0678">Repressor</keyword>
<keyword id="KW-0687">Ribonucleoprotein</keyword>
<keyword id="KW-0689">Ribosomal protein</keyword>
<keyword id="KW-0694">RNA-binding</keyword>
<keyword id="KW-0699">rRNA-binding</keyword>
<keyword id="KW-0810">Translation regulation</keyword>
<keyword id="KW-0820">tRNA-binding</keyword>
<proteinExistence type="inferred from homology"/>
<gene>
    <name evidence="1" type="primary">rpl1</name>
    <name type="ordered locus">HQ_2903A</name>
</gene>
<name>RL1_HALWD</name>
<sequence length="212" mass="23218">MADTITDAVSRAIDEAPTRNFRETVDLAVNLRDLDLNDPSNRVDESVVLPAGTGQETQIVVFASGETALRAEDVADQVLSGDELEELGDDDDAAKDLADEIDFFVAEAGMMQDIGRFLGTILGPRGKMPTPLQPDDDVVETVNRMQNTVQIRSRERRTFHTRVGAQDMDSEEIADNVDVIIRRLEATLEKGPLNIDSMYVKTTMGPAVEVPA</sequence>